<dbReference type="SMR" id="P85083"/>
<dbReference type="FunCoup" id="P85083">
    <property type="interactions" value="490"/>
</dbReference>
<dbReference type="iPTMnet" id="P85083"/>
<dbReference type="Ensembl" id="ENSCGOT00000032239">
    <property type="protein sequence ID" value="ENSCGOP00000030030"/>
    <property type="gene ID" value="ENSCGOG00000013969"/>
</dbReference>
<dbReference type="InParanoid" id="P85083"/>
<dbReference type="OrthoDB" id="8751793at2759"/>
<dbReference type="Proteomes" id="UP000504630">
    <property type="component" value="Unplaced"/>
</dbReference>
<dbReference type="GO" id="GO:0072562">
    <property type="term" value="C:blood microparticle"/>
    <property type="evidence" value="ECO:0007669"/>
    <property type="project" value="TreeGrafter"/>
</dbReference>
<dbReference type="GO" id="GO:0031838">
    <property type="term" value="C:haptoglobin-hemoglobin complex"/>
    <property type="evidence" value="ECO:0007669"/>
    <property type="project" value="TreeGrafter"/>
</dbReference>
<dbReference type="GO" id="GO:0005833">
    <property type="term" value="C:hemoglobin complex"/>
    <property type="evidence" value="ECO:0007669"/>
    <property type="project" value="InterPro"/>
</dbReference>
<dbReference type="GO" id="GO:0031720">
    <property type="term" value="F:haptoglobin binding"/>
    <property type="evidence" value="ECO:0007669"/>
    <property type="project" value="TreeGrafter"/>
</dbReference>
<dbReference type="GO" id="GO:0020037">
    <property type="term" value="F:heme binding"/>
    <property type="evidence" value="ECO:0007669"/>
    <property type="project" value="InterPro"/>
</dbReference>
<dbReference type="GO" id="GO:0046872">
    <property type="term" value="F:metal ion binding"/>
    <property type="evidence" value="ECO:0007669"/>
    <property type="project" value="UniProtKB-KW"/>
</dbReference>
<dbReference type="GO" id="GO:0043177">
    <property type="term" value="F:organic acid binding"/>
    <property type="evidence" value="ECO:0007669"/>
    <property type="project" value="TreeGrafter"/>
</dbReference>
<dbReference type="GO" id="GO:0019825">
    <property type="term" value="F:oxygen binding"/>
    <property type="evidence" value="ECO:0007669"/>
    <property type="project" value="InterPro"/>
</dbReference>
<dbReference type="GO" id="GO:0005344">
    <property type="term" value="F:oxygen carrier activity"/>
    <property type="evidence" value="ECO:0007669"/>
    <property type="project" value="UniProtKB-KW"/>
</dbReference>
<dbReference type="GO" id="GO:0004601">
    <property type="term" value="F:peroxidase activity"/>
    <property type="evidence" value="ECO:0007669"/>
    <property type="project" value="TreeGrafter"/>
</dbReference>
<dbReference type="GO" id="GO:0042744">
    <property type="term" value="P:hydrogen peroxide catabolic process"/>
    <property type="evidence" value="ECO:0007669"/>
    <property type="project" value="TreeGrafter"/>
</dbReference>
<dbReference type="CDD" id="cd08927">
    <property type="entry name" value="Hb-alpha-like"/>
    <property type="match status" value="1"/>
</dbReference>
<dbReference type="FunFam" id="1.10.490.10:FF:000002">
    <property type="entry name" value="Hemoglobin subunit alpha"/>
    <property type="match status" value="1"/>
</dbReference>
<dbReference type="Gene3D" id="1.10.490.10">
    <property type="entry name" value="Globins"/>
    <property type="match status" value="1"/>
</dbReference>
<dbReference type="InterPro" id="IPR000971">
    <property type="entry name" value="Globin"/>
</dbReference>
<dbReference type="InterPro" id="IPR009050">
    <property type="entry name" value="Globin-like_sf"/>
</dbReference>
<dbReference type="InterPro" id="IPR012292">
    <property type="entry name" value="Globin/Proto"/>
</dbReference>
<dbReference type="InterPro" id="IPR002338">
    <property type="entry name" value="Hemoglobin_a-typ"/>
</dbReference>
<dbReference type="InterPro" id="IPR050056">
    <property type="entry name" value="Hemoglobin_oxygen_transport"/>
</dbReference>
<dbReference type="PANTHER" id="PTHR11442:SF91">
    <property type="entry name" value="EMBRYONIC ALPHA GLOBIN E1-RELATED"/>
    <property type="match status" value="1"/>
</dbReference>
<dbReference type="PANTHER" id="PTHR11442">
    <property type="entry name" value="HEMOGLOBIN FAMILY MEMBER"/>
    <property type="match status" value="1"/>
</dbReference>
<dbReference type="Pfam" id="PF00042">
    <property type="entry name" value="Globin"/>
    <property type="match status" value="1"/>
</dbReference>
<dbReference type="PRINTS" id="PR00612">
    <property type="entry name" value="ALPHAHAEM"/>
</dbReference>
<dbReference type="SUPFAM" id="SSF46458">
    <property type="entry name" value="Globin-like"/>
    <property type="match status" value="1"/>
</dbReference>
<dbReference type="PROSITE" id="PS01033">
    <property type="entry name" value="GLOBIN"/>
    <property type="match status" value="1"/>
</dbReference>
<proteinExistence type="evidence at protein level"/>
<reference evidence="5" key="1">
    <citation type="journal article" date="2009" name="FEBS J.">
        <title>The hemoglobins of the sub-Antarctic fish Cottoperca gobio, a phyletically basal species--oxygen-binding equilibria, kinetics and molecular dynamics.</title>
        <authorList>
            <person name="Giordano D."/>
            <person name="Boechi L."/>
            <person name="Vergara A."/>
            <person name="Marti M.A."/>
            <person name="Samuni U."/>
            <person name="Dantsker D."/>
            <person name="Grassi L."/>
            <person name="Estrin D.A."/>
            <person name="Friedman J.M."/>
            <person name="Mazzarella L."/>
            <person name="di Prisco G."/>
            <person name="Verde C."/>
        </authorList>
    </citation>
    <scope>PROTEIN SEQUENCE OF 2-143</scope>
    <scope>SUBUNIT</scope>
    <scope>ACETYLATION AT SER-2</scope>
    <source>
        <tissue evidence="3">Blood</tissue>
    </source>
</reference>
<sequence length="143" mass="15764">MSLSTKDKDTVTAFWGKVSCKAGDIGTDALSRMLVVYPQTKTYFSHWKELGPGSPPVQKHGMTVMKGVGEAVAKIDDLTAGLLNLSELHAFTLRVDPANFKILSHNILVVFAIMFPHDFTPEVHVSMDKFLAALARALSEKYR</sequence>
<comment type="function">
    <text evidence="5">Involved in oxygen transport from gills to the various peripheral tissues.</text>
</comment>
<comment type="subunit">
    <text evidence="3">Hb 2 is a heterotetramer of two alpha-2 and two beta chains.</text>
</comment>
<comment type="tissue specificity">
    <text evidence="5">Red blood cells.</text>
</comment>
<comment type="miscellaneous">
    <text evidence="3">This fish has two hemoglobins: Hb1 and Hb2. They display the Bohr and root effects.</text>
</comment>
<comment type="similarity">
    <text evidence="2">Belongs to the globin family.</text>
</comment>
<keyword id="KW-0007">Acetylation</keyword>
<keyword id="KW-0903">Direct protein sequencing</keyword>
<keyword id="KW-0349">Heme</keyword>
<keyword id="KW-0408">Iron</keyword>
<keyword id="KW-0479">Metal-binding</keyword>
<keyword id="KW-0561">Oxygen transport</keyword>
<keyword id="KW-1185">Reference proteome</keyword>
<keyword id="KW-0813">Transport</keyword>
<organism>
    <name type="scientific">Cottoperca gobio</name>
    <name type="common">Frogmouth</name>
    <name type="synonym">Aphritis gobio</name>
    <dbReference type="NCBI Taxonomy" id="56716"/>
    <lineage>
        <taxon>Eukaryota</taxon>
        <taxon>Metazoa</taxon>
        <taxon>Chordata</taxon>
        <taxon>Craniata</taxon>
        <taxon>Vertebrata</taxon>
        <taxon>Euteleostomi</taxon>
        <taxon>Actinopterygii</taxon>
        <taxon>Neopterygii</taxon>
        <taxon>Teleostei</taxon>
        <taxon>Neoteleostei</taxon>
        <taxon>Acanthomorphata</taxon>
        <taxon>Eupercaria</taxon>
        <taxon>Perciformes</taxon>
        <taxon>Notothenioidei</taxon>
        <taxon>Bovichtidae</taxon>
        <taxon>Cottoperca</taxon>
    </lineage>
</organism>
<accession>P85083</accession>
<protein>
    <recommendedName>
        <fullName evidence="1">Hemoglobin subunit alpha-2</fullName>
    </recommendedName>
    <alternativeName>
        <fullName evidence="1">Alpha-2-globin</fullName>
    </alternativeName>
    <alternativeName>
        <fullName evidence="4">Hemoglobin alpha-2 chain</fullName>
    </alternativeName>
</protein>
<gene>
    <name evidence="1" type="primary">hba2</name>
</gene>
<feature type="initiator methionine" description="Removed" evidence="3">
    <location>
        <position position="1"/>
    </location>
</feature>
<feature type="chain" id="PRO_0000389529" description="Hemoglobin subunit alpha-2" evidence="3">
    <location>
        <begin position="2"/>
        <end position="143"/>
    </location>
</feature>
<feature type="domain" description="Globin" evidence="2">
    <location>
        <begin position="2"/>
        <end position="143"/>
    </location>
</feature>
<feature type="binding site" description="distal binding residue" evidence="1 2">
    <location>
        <position position="60"/>
    </location>
    <ligand>
        <name>heme b</name>
        <dbReference type="ChEBI" id="CHEBI:60344"/>
    </ligand>
    <ligandPart>
        <name>Fe</name>
        <dbReference type="ChEBI" id="CHEBI:18248"/>
    </ligandPart>
</feature>
<feature type="binding site" description="proximal binding residue" evidence="1 2">
    <location>
        <position position="89"/>
    </location>
    <ligand>
        <name>heme b</name>
        <dbReference type="ChEBI" id="CHEBI:60344"/>
    </ligand>
    <ligandPart>
        <name>Fe</name>
        <dbReference type="ChEBI" id="CHEBI:18248"/>
    </ligandPart>
</feature>
<feature type="modified residue" description="N-acetylserine" evidence="3">
    <location>
        <position position="2"/>
    </location>
</feature>
<name>HBA2_COTGO</name>
<evidence type="ECO:0000250" key="1">
    <source>
        <dbReference type="UniProtKB" id="P45719"/>
    </source>
</evidence>
<evidence type="ECO:0000255" key="2">
    <source>
        <dbReference type="PROSITE-ProRule" id="PRU00238"/>
    </source>
</evidence>
<evidence type="ECO:0000269" key="3">
    <source>
    </source>
</evidence>
<evidence type="ECO:0000303" key="4">
    <source>
    </source>
</evidence>
<evidence type="ECO:0000305" key="5"/>